<evidence type="ECO:0000255" key="1">
    <source>
        <dbReference type="HAMAP-Rule" id="MF_00444"/>
    </source>
</evidence>
<gene>
    <name evidence="1" type="primary">clpP1</name>
    <name type="ordered locus">BT9727_2551</name>
</gene>
<name>CLPP1_BACHK</name>
<comment type="function">
    <text evidence="1">Cleaves peptides in various proteins in a process that requires ATP hydrolysis. Has a chymotrypsin-like activity. Plays a major role in the degradation of misfolded proteins.</text>
</comment>
<comment type="catalytic activity">
    <reaction evidence="1">
        <text>Hydrolysis of proteins to small peptides in the presence of ATP and magnesium. alpha-casein is the usual test substrate. In the absence of ATP, only oligopeptides shorter than five residues are hydrolyzed (such as succinyl-Leu-Tyr-|-NHMec, and Leu-Tyr-Leu-|-Tyr-Trp, in which cleavage of the -Tyr-|-Leu- and -Tyr-|-Trp bonds also occurs).</text>
        <dbReference type="EC" id="3.4.21.92"/>
    </reaction>
</comment>
<comment type="subunit">
    <text evidence="1">Fourteen ClpP subunits assemble into 2 heptameric rings which stack back to back to give a disk-like structure with a central cavity, resembling the structure of eukaryotic proteasomes.</text>
</comment>
<comment type="subcellular location">
    <subcellularLocation>
        <location evidence="1">Cytoplasm</location>
    </subcellularLocation>
</comment>
<comment type="similarity">
    <text evidence="1">Belongs to the peptidase S14 family.</text>
</comment>
<proteinExistence type="inferred from homology"/>
<accession>Q6HHU9</accession>
<dbReference type="EC" id="3.4.21.92" evidence="1"/>
<dbReference type="EMBL" id="AE017355">
    <property type="protein sequence ID" value="AAT61328.1"/>
    <property type="molecule type" value="Genomic_DNA"/>
</dbReference>
<dbReference type="RefSeq" id="YP_036877.1">
    <property type="nucleotide sequence ID" value="NC_005957.1"/>
</dbReference>
<dbReference type="SMR" id="Q6HHU9"/>
<dbReference type="MEROPS" id="S14.001"/>
<dbReference type="KEGG" id="btk:BT9727_2551"/>
<dbReference type="PATRIC" id="fig|281309.8.peg.2701"/>
<dbReference type="HOGENOM" id="CLU_058707_3_2_9"/>
<dbReference type="Proteomes" id="UP000001301">
    <property type="component" value="Chromosome"/>
</dbReference>
<dbReference type="GO" id="GO:0005737">
    <property type="term" value="C:cytoplasm"/>
    <property type="evidence" value="ECO:0007669"/>
    <property type="project" value="UniProtKB-SubCell"/>
</dbReference>
<dbReference type="GO" id="GO:0009368">
    <property type="term" value="C:endopeptidase Clp complex"/>
    <property type="evidence" value="ECO:0007669"/>
    <property type="project" value="TreeGrafter"/>
</dbReference>
<dbReference type="GO" id="GO:0004176">
    <property type="term" value="F:ATP-dependent peptidase activity"/>
    <property type="evidence" value="ECO:0007669"/>
    <property type="project" value="InterPro"/>
</dbReference>
<dbReference type="GO" id="GO:0051117">
    <property type="term" value="F:ATPase binding"/>
    <property type="evidence" value="ECO:0007669"/>
    <property type="project" value="TreeGrafter"/>
</dbReference>
<dbReference type="GO" id="GO:0004252">
    <property type="term" value="F:serine-type endopeptidase activity"/>
    <property type="evidence" value="ECO:0007669"/>
    <property type="project" value="UniProtKB-UniRule"/>
</dbReference>
<dbReference type="GO" id="GO:0006515">
    <property type="term" value="P:protein quality control for misfolded or incompletely synthesized proteins"/>
    <property type="evidence" value="ECO:0007669"/>
    <property type="project" value="TreeGrafter"/>
</dbReference>
<dbReference type="CDD" id="cd07017">
    <property type="entry name" value="S14_ClpP_2"/>
    <property type="match status" value="1"/>
</dbReference>
<dbReference type="FunFam" id="3.90.226.10:FF:000001">
    <property type="entry name" value="ATP-dependent Clp protease proteolytic subunit"/>
    <property type="match status" value="1"/>
</dbReference>
<dbReference type="Gene3D" id="3.90.226.10">
    <property type="entry name" value="2-enoyl-CoA Hydratase, Chain A, domain 1"/>
    <property type="match status" value="1"/>
</dbReference>
<dbReference type="HAMAP" id="MF_00444">
    <property type="entry name" value="ClpP"/>
    <property type="match status" value="1"/>
</dbReference>
<dbReference type="InterPro" id="IPR001907">
    <property type="entry name" value="ClpP"/>
</dbReference>
<dbReference type="InterPro" id="IPR029045">
    <property type="entry name" value="ClpP/crotonase-like_dom_sf"/>
</dbReference>
<dbReference type="InterPro" id="IPR023562">
    <property type="entry name" value="ClpP/TepA"/>
</dbReference>
<dbReference type="InterPro" id="IPR033135">
    <property type="entry name" value="ClpP_His_AS"/>
</dbReference>
<dbReference type="NCBIfam" id="TIGR00493">
    <property type="entry name" value="clpP"/>
    <property type="match status" value="1"/>
</dbReference>
<dbReference type="NCBIfam" id="NF001368">
    <property type="entry name" value="PRK00277.1"/>
    <property type="match status" value="1"/>
</dbReference>
<dbReference type="NCBIfam" id="NF009205">
    <property type="entry name" value="PRK12553.1"/>
    <property type="match status" value="1"/>
</dbReference>
<dbReference type="PANTHER" id="PTHR10381">
    <property type="entry name" value="ATP-DEPENDENT CLP PROTEASE PROTEOLYTIC SUBUNIT"/>
    <property type="match status" value="1"/>
</dbReference>
<dbReference type="PANTHER" id="PTHR10381:SF70">
    <property type="entry name" value="ATP-DEPENDENT CLP PROTEASE PROTEOLYTIC SUBUNIT"/>
    <property type="match status" value="1"/>
</dbReference>
<dbReference type="Pfam" id="PF00574">
    <property type="entry name" value="CLP_protease"/>
    <property type="match status" value="1"/>
</dbReference>
<dbReference type="PRINTS" id="PR00127">
    <property type="entry name" value="CLPPROTEASEP"/>
</dbReference>
<dbReference type="SUPFAM" id="SSF52096">
    <property type="entry name" value="ClpP/crotonase"/>
    <property type="match status" value="1"/>
</dbReference>
<dbReference type="PROSITE" id="PS00382">
    <property type="entry name" value="CLP_PROTEASE_HIS"/>
    <property type="match status" value="1"/>
</dbReference>
<reference key="1">
    <citation type="journal article" date="2006" name="J. Bacteriol.">
        <title>Pathogenomic sequence analysis of Bacillus cereus and Bacillus thuringiensis isolates closely related to Bacillus anthracis.</title>
        <authorList>
            <person name="Han C.S."/>
            <person name="Xie G."/>
            <person name="Challacombe J.F."/>
            <person name="Altherr M.R."/>
            <person name="Bhotika S.S."/>
            <person name="Bruce D."/>
            <person name="Campbell C.S."/>
            <person name="Campbell M.L."/>
            <person name="Chen J."/>
            <person name="Chertkov O."/>
            <person name="Cleland C."/>
            <person name="Dimitrijevic M."/>
            <person name="Doggett N.A."/>
            <person name="Fawcett J.J."/>
            <person name="Glavina T."/>
            <person name="Goodwin L.A."/>
            <person name="Hill K.K."/>
            <person name="Hitchcock P."/>
            <person name="Jackson P.J."/>
            <person name="Keim P."/>
            <person name="Kewalramani A.R."/>
            <person name="Longmire J."/>
            <person name="Lucas S."/>
            <person name="Malfatti S."/>
            <person name="McMurry K."/>
            <person name="Meincke L.J."/>
            <person name="Misra M."/>
            <person name="Moseman B.L."/>
            <person name="Mundt M."/>
            <person name="Munk A.C."/>
            <person name="Okinaka R.T."/>
            <person name="Parson-Quintana B."/>
            <person name="Reilly L.P."/>
            <person name="Richardson P."/>
            <person name="Robinson D.L."/>
            <person name="Rubin E."/>
            <person name="Saunders E."/>
            <person name="Tapia R."/>
            <person name="Tesmer J.G."/>
            <person name="Thayer N."/>
            <person name="Thompson L.S."/>
            <person name="Tice H."/>
            <person name="Ticknor L.O."/>
            <person name="Wills P.L."/>
            <person name="Brettin T.S."/>
            <person name="Gilna P."/>
        </authorList>
    </citation>
    <scope>NUCLEOTIDE SEQUENCE [LARGE SCALE GENOMIC DNA]</scope>
    <source>
        <strain>97-27</strain>
    </source>
</reference>
<sequence>MNAIPYVVEQTKLGERSYDIYSRLLKDRIVIIGSEINDQVASSVVAQLLFLEAEDAEKDIFLYINSPGGSTTAGFAILDTMNLIKPDVQTLCMGFAASFGALLLLSGAKGKRFALPNSEIMIHQPLGGAQGQATEIEITAKRILKLKHDINKMIAEKTGQPIERVAHDTERDYFMTAEEAKAYGIVDDVVTKK</sequence>
<keyword id="KW-0963">Cytoplasm</keyword>
<keyword id="KW-0378">Hydrolase</keyword>
<keyword id="KW-0645">Protease</keyword>
<keyword id="KW-0720">Serine protease</keyword>
<protein>
    <recommendedName>
        <fullName evidence="1">ATP-dependent Clp protease proteolytic subunit 1</fullName>
        <ecNumber evidence="1">3.4.21.92</ecNumber>
    </recommendedName>
    <alternativeName>
        <fullName evidence="1">Endopeptidase Clp 1</fullName>
    </alternativeName>
</protein>
<organism>
    <name type="scientific">Bacillus thuringiensis subsp. konkukian (strain 97-27)</name>
    <dbReference type="NCBI Taxonomy" id="281309"/>
    <lineage>
        <taxon>Bacteria</taxon>
        <taxon>Bacillati</taxon>
        <taxon>Bacillota</taxon>
        <taxon>Bacilli</taxon>
        <taxon>Bacillales</taxon>
        <taxon>Bacillaceae</taxon>
        <taxon>Bacillus</taxon>
        <taxon>Bacillus cereus group</taxon>
    </lineage>
</organism>
<feature type="chain" id="PRO_0000179495" description="ATP-dependent Clp protease proteolytic subunit 1">
    <location>
        <begin position="1"/>
        <end position="193"/>
    </location>
</feature>
<feature type="active site" description="Nucleophile" evidence="1">
    <location>
        <position position="98"/>
    </location>
</feature>
<feature type="active site" evidence="1">
    <location>
        <position position="123"/>
    </location>
</feature>